<proteinExistence type="inferred from homology"/>
<keyword id="KW-0687">Ribonucleoprotein</keyword>
<keyword id="KW-0689">Ribosomal protein</keyword>
<keyword id="KW-0694">RNA-binding</keyword>
<keyword id="KW-0699">rRNA-binding</keyword>
<gene>
    <name evidence="1" type="primary">rpsE</name>
    <name type="ordered locus">NMCC_1990</name>
</gene>
<feature type="chain" id="PRO_1000140874" description="Small ribosomal subunit protein uS5">
    <location>
        <begin position="1"/>
        <end position="172"/>
    </location>
</feature>
<feature type="domain" description="S5 DRBM" evidence="1">
    <location>
        <begin position="13"/>
        <end position="76"/>
    </location>
</feature>
<evidence type="ECO:0000255" key="1">
    <source>
        <dbReference type="HAMAP-Rule" id="MF_01307"/>
    </source>
</evidence>
<evidence type="ECO:0000305" key="2"/>
<comment type="function">
    <text evidence="1">With S4 and S12 plays an important role in translational accuracy.</text>
</comment>
<comment type="function">
    <text evidence="1">Located at the back of the 30S subunit body where it stabilizes the conformation of the head with respect to the body.</text>
</comment>
<comment type="subunit">
    <text evidence="1">Part of the 30S ribosomal subunit. Contacts proteins S4 and S8.</text>
</comment>
<comment type="domain">
    <text>The N-terminal domain interacts with the head of the 30S subunit; the C-terminal domain interacts with the body and contacts protein S4. The interaction surface between S4 and S5 is involved in control of translational fidelity.</text>
</comment>
<comment type="similarity">
    <text evidence="1">Belongs to the universal ribosomal protein uS5 family.</text>
</comment>
<organism>
    <name type="scientific">Neisseria meningitidis serogroup C (strain 053442)</name>
    <dbReference type="NCBI Taxonomy" id="374833"/>
    <lineage>
        <taxon>Bacteria</taxon>
        <taxon>Pseudomonadati</taxon>
        <taxon>Pseudomonadota</taxon>
        <taxon>Betaproteobacteria</taxon>
        <taxon>Neisseriales</taxon>
        <taxon>Neisseriaceae</taxon>
        <taxon>Neisseria</taxon>
    </lineage>
</organism>
<protein>
    <recommendedName>
        <fullName evidence="1">Small ribosomal subunit protein uS5</fullName>
    </recommendedName>
    <alternativeName>
        <fullName evidence="2">30S ribosomal protein S5</fullName>
    </alternativeName>
</protein>
<name>RS5_NEIM0</name>
<accession>A9M3U9</accession>
<sequence>MAKHEIEERGDGLIEKMVAVNRVTKVVKGGRIMAFSALTVVGDGDGRIGMGKGKSKEVPVAVQKAMDQARRSMIKVPLKNGTIHHEVIGRHGATKVFMQPAKEGSGVKAGGPMRLVFDAMGIHNISAKVHGSTNPYNIVRATLDGLSKLHTPADIAAKRGLTVEDILGVNHG</sequence>
<reference key="1">
    <citation type="journal article" date="2008" name="Genomics">
        <title>Characterization of ST-4821 complex, a unique Neisseria meningitidis clone.</title>
        <authorList>
            <person name="Peng J."/>
            <person name="Yang L."/>
            <person name="Yang F."/>
            <person name="Yang J."/>
            <person name="Yan Y."/>
            <person name="Nie H."/>
            <person name="Zhang X."/>
            <person name="Xiong Z."/>
            <person name="Jiang Y."/>
            <person name="Cheng F."/>
            <person name="Xu X."/>
            <person name="Chen S."/>
            <person name="Sun L."/>
            <person name="Li W."/>
            <person name="Shen Y."/>
            <person name="Shao Z."/>
            <person name="Liang X."/>
            <person name="Xu J."/>
            <person name="Jin Q."/>
        </authorList>
    </citation>
    <scope>NUCLEOTIDE SEQUENCE [LARGE SCALE GENOMIC DNA]</scope>
    <source>
        <strain>053442</strain>
    </source>
</reference>
<dbReference type="EMBL" id="CP000381">
    <property type="protein sequence ID" value="ABX74113.1"/>
    <property type="molecule type" value="Genomic_DNA"/>
</dbReference>
<dbReference type="RefSeq" id="WP_002215445.1">
    <property type="nucleotide sequence ID" value="NC_010120.1"/>
</dbReference>
<dbReference type="SMR" id="A9M3U9"/>
<dbReference type="GeneID" id="93387234"/>
<dbReference type="KEGG" id="nmn:NMCC_1990"/>
<dbReference type="HOGENOM" id="CLU_065898_2_2_4"/>
<dbReference type="Proteomes" id="UP000001177">
    <property type="component" value="Chromosome"/>
</dbReference>
<dbReference type="GO" id="GO:0015935">
    <property type="term" value="C:small ribosomal subunit"/>
    <property type="evidence" value="ECO:0007669"/>
    <property type="project" value="InterPro"/>
</dbReference>
<dbReference type="GO" id="GO:0019843">
    <property type="term" value="F:rRNA binding"/>
    <property type="evidence" value="ECO:0007669"/>
    <property type="project" value="UniProtKB-UniRule"/>
</dbReference>
<dbReference type="GO" id="GO:0003735">
    <property type="term" value="F:structural constituent of ribosome"/>
    <property type="evidence" value="ECO:0007669"/>
    <property type="project" value="InterPro"/>
</dbReference>
<dbReference type="GO" id="GO:0006412">
    <property type="term" value="P:translation"/>
    <property type="evidence" value="ECO:0007669"/>
    <property type="project" value="UniProtKB-UniRule"/>
</dbReference>
<dbReference type="FunFam" id="3.30.160.20:FF:000001">
    <property type="entry name" value="30S ribosomal protein S5"/>
    <property type="match status" value="1"/>
</dbReference>
<dbReference type="FunFam" id="3.30.230.10:FF:000002">
    <property type="entry name" value="30S ribosomal protein S5"/>
    <property type="match status" value="1"/>
</dbReference>
<dbReference type="Gene3D" id="3.30.160.20">
    <property type="match status" value="1"/>
</dbReference>
<dbReference type="Gene3D" id="3.30.230.10">
    <property type="match status" value="1"/>
</dbReference>
<dbReference type="HAMAP" id="MF_01307_B">
    <property type="entry name" value="Ribosomal_uS5_B"/>
    <property type="match status" value="1"/>
</dbReference>
<dbReference type="InterPro" id="IPR020568">
    <property type="entry name" value="Ribosomal_Su5_D2-typ_SF"/>
</dbReference>
<dbReference type="InterPro" id="IPR000851">
    <property type="entry name" value="Ribosomal_uS5"/>
</dbReference>
<dbReference type="InterPro" id="IPR005712">
    <property type="entry name" value="Ribosomal_uS5_bac-type"/>
</dbReference>
<dbReference type="InterPro" id="IPR005324">
    <property type="entry name" value="Ribosomal_uS5_C"/>
</dbReference>
<dbReference type="InterPro" id="IPR013810">
    <property type="entry name" value="Ribosomal_uS5_N"/>
</dbReference>
<dbReference type="InterPro" id="IPR018192">
    <property type="entry name" value="Ribosomal_uS5_N_CS"/>
</dbReference>
<dbReference type="InterPro" id="IPR014721">
    <property type="entry name" value="Ribsml_uS5_D2-typ_fold_subgr"/>
</dbReference>
<dbReference type="NCBIfam" id="TIGR01021">
    <property type="entry name" value="rpsE_bact"/>
    <property type="match status" value="1"/>
</dbReference>
<dbReference type="PANTHER" id="PTHR48277">
    <property type="entry name" value="MITOCHONDRIAL RIBOSOMAL PROTEIN S5"/>
    <property type="match status" value="1"/>
</dbReference>
<dbReference type="PANTHER" id="PTHR48277:SF1">
    <property type="entry name" value="MITOCHONDRIAL RIBOSOMAL PROTEIN S5"/>
    <property type="match status" value="1"/>
</dbReference>
<dbReference type="Pfam" id="PF00333">
    <property type="entry name" value="Ribosomal_S5"/>
    <property type="match status" value="1"/>
</dbReference>
<dbReference type="Pfam" id="PF03719">
    <property type="entry name" value="Ribosomal_S5_C"/>
    <property type="match status" value="1"/>
</dbReference>
<dbReference type="SUPFAM" id="SSF54768">
    <property type="entry name" value="dsRNA-binding domain-like"/>
    <property type="match status" value="1"/>
</dbReference>
<dbReference type="SUPFAM" id="SSF54211">
    <property type="entry name" value="Ribosomal protein S5 domain 2-like"/>
    <property type="match status" value="1"/>
</dbReference>
<dbReference type="PROSITE" id="PS00585">
    <property type="entry name" value="RIBOSOMAL_S5"/>
    <property type="match status" value="1"/>
</dbReference>
<dbReference type="PROSITE" id="PS50881">
    <property type="entry name" value="S5_DSRBD"/>
    <property type="match status" value="1"/>
</dbReference>